<reference key="1">
    <citation type="journal article" date="1997" name="Nature">
        <title>Genomic sequence of a Lyme disease spirochaete, Borrelia burgdorferi.</title>
        <authorList>
            <person name="Fraser C.M."/>
            <person name="Casjens S."/>
            <person name="Huang W.M."/>
            <person name="Sutton G.G."/>
            <person name="Clayton R.A."/>
            <person name="Lathigra R."/>
            <person name="White O."/>
            <person name="Ketchum K.A."/>
            <person name="Dodson R.J."/>
            <person name="Hickey E.K."/>
            <person name="Gwinn M.L."/>
            <person name="Dougherty B.A."/>
            <person name="Tomb J.-F."/>
            <person name="Fleischmann R.D."/>
            <person name="Richardson D.L."/>
            <person name="Peterson J.D."/>
            <person name="Kerlavage A.R."/>
            <person name="Quackenbush J."/>
            <person name="Salzberg S.L."/>
            <person name="Hanson M."/>
            <person name="van Vugt R."/>
            <person name="Palmer N."/>
            <person name="Adams M.D."/>
            <person name="Gocayne J.D."/>
            <person name="Weidman J.F."/>
            <person name="Utterback T.R."/>
            <person name="Watthey L."/>
            <person name="McDonald L.A."/>
            <person name="Artiach P."/>
            <person name="Bowman C."/>
            <person name="Garland S.A."/>
            <person name="Fujii C."/>
            <person name="Cotton M.D."/>
            <person name="Horst K."/>
            <person name="Roberts K.M."/>
            <person name="Hatch B."/>
            <person name="Smith H.O."/>
            <person name="Venter J.C."/>
        </authorList>
    </citation>
    <scope>NUCLEOTIDE SEQUENCE [LARGE SCALE GENOMIC DNA]</scope>
    <source>
        <strain>ATCC 35210 / DSM 4680 / CIP 102532 / B31</strain>
    </source>
</reference>
<accession>O51710</accession>
<dbReference type="EC" id="2.3.1.234" evidence="1"/>
<dbReference type="EMBL" id="AE000783">
    <property type="protein sequence ID" value="AAC67111.1"/>
    <property type="molecule type" value="Genomic_DNA"/>
</dbReference>
<dbReference type="PIR" id="H70195">
    <property type="entry name" value="H70195"/>
</dbReference>
<dbReference type="RefSeq" id="NP_212903.1">
    <property type="nucleotide sequence ID" value="NC_001318.1"/>
</dbReference>
<dbReference type="RefSeq" id="WP_002557356.1">
    <property type="nucleotide sequence ID" value="NC_001318.1"/>
</dbReference>
<dbReference type="SMR" id="O51710"/>
<dbReference type="STRING" id="224326.BB_0769"/>
<dbReference type="PaxDb" id="224326-BB_0769"/>
<dbReference type="EnsemblBacteria" id="AAC67111">
    <property type="protein sequence ID" value="AAC67111"/>
    <property type="gene ID" value="BB_0769"/>
</dbReference>
<dbReference type="KEGG" id="bbu:BB_0769"/>
<dbReference type="PATRIC" id="fig|224326.49.peg.1160"/>
<dbReference type="HOGENOM" id="CLU_023208_0_2_12"/>
<dbReference type="OrthoDB" id="9806197at2"/>
<dbReference type="Proteomes" id="UP000001807">
    <property type="component" value="Chromosome"/>
</dbReference>
<dbReference type="GO" id="GO:0005737">
    <property type="term" value="C:cytoplasm"/>
    <property type="evidence" value="ECO:0007669"/>
    <property type="project" value="UniProtKB-SubCell"/>
</dbReference>
<dbReference type="GO" id="GO:0005506">
    <property type="term" value="F:iron ion binding"/>
    <property type="evidence" value="ECO:0007669"/>
    <property type="project" value="UniProtKB-UniRule"/>
</dbReference>
<dbReference type="GO" id="GO:0061711">
    <property type="term" value="F:N(6)-L-threonylcarbamoyladenine synthase activity"/>
    <property type="evidence" value="ECO:0007669"/>
    <property type="project" value="UniProtKB-EC"/>
</dbReference>
<dbReference type="GO" id="GO:0002949">
    <property type="term" value="P:tRNA threonylcarbamoyladenosine modification"/>
    <property type="evidence" value="ECO:0007669"/>
    <property type="project" value="UniProtKB-UniRule"/>
</dbReference>
<dbReference type="CDD" id="cd24133">
    <property type="entry name" value="ASKHA_NBD_TsaD_bac"/>
    <property type="match status" value="1"/>
</dbReference>
<dbReference type="FunFam" id="3.30.420.40:FF:000040">
    <property type="entry name" value="tRNA N6-adenosine threonylcarbamoyltransferase"/>
    <property type="match status" value="1"/>
</dbReference>
<dbReference type="Gene3D" id="3.30.420.40">
    <property type="match status" value="2"/>
</dbReference>
<dbReference type="HAMAP" id="MF_01445">
    <property type="entry name" value="TsaD"/>
    <property type="match status" value="1"/>
</dbReference>
<dbReference type="InterPro" id="IPR043129">
    <property type="entry name" value="ATPase_NBD"/>
</dbReference>
<dbReference type="InterPro" id="IPR000905">
    <property type="entry name" value="Gcp-like_dom"/>
</dbReference>
<dbReference type="InterPro" id="IPR017861">
    <property type="entry name" value="KAE1/TsaD"/>
</dbReference>
<dbReference type="InterPro" id="IPR017860">
    <property type="entry name" value="Peptidase_M22_CS"/>
</dbReference>
<dbReference type="InterPro" id="IPR022450">
    <property type="entry name" value="TsaD"/>
</dbReference>
<dbReference type="NCBIfam" id="TIGR00329">
    <property type="entry name" value="gcp_kae1"/>
    <property type="match status" value="1"/>
</dbReference>
<dbReference type="NCBIfam" id="TIGR03723">
    <property type="entry name" value="T6A_TsaD_YgjD"/>
    <property type="match status" value="1"/>
</dbReference>
<dbReference type="PANTHER" id="PTHR11735">
    <property type="entry name" value="TRNA N6-ADENOSINE THREONYLCARBAMOYLTRANSFERASE"/>
    <property type="match status" value="1"/>
</dbReference>
<dbReference type="PANTHER" id="PTHR11735:SF6">
    <property type="entry name" value="TRNA N6-ADENOSINE THREONYLCARBAMOYLTRANSFERASE, MITOCHONDRIAL"/>
    <property type="match status" value="1"/>
</dbReference>
<dbReference type="Pfam" id="PF00814">
    <property type="entry name" value="TsaD"/>
    <property type="match status" value="1"/>
</dbReference>
<dbReference type="PRINTS" id="PR00789">
    <property type="entry name" value="OSIALOPTASE"/>
</dbReference>
<dbReference type="SUPFAM" id="SSF53067">
    <property type="entry name" value="Actin-like ATPase domain"/>
    <property type="match status" value="2"/>
</dbReference>
<dbReference type="PROSITE" id="PS01016">
    <property type="entry name" value="GLYCOPROTEASE"/>
    <property type="match status" value="1"/>
</dbReference>
<keyword id="KW-0012">Acyltransferase</keyword>
<keyword id="KW-0963">Cytoplasm</keyword>
<keyword id="KW-0408">Iron</keyword>
<keyword id="KW-0479">Metal-binding</keyword>
<keyword id="KW-1185">Reference proteome</keyword>
<keyword id="KW-0808">Transferase</keyword>
<keyword id="KW-0819">tRNA processing</keyword>
<protein>
    <recommendedName>
        <fullName evidence="1">tRNA N6-adenosine threonylcarbamoyltransferase</fullName>
        <ecNumber evidence="1">2.3.1.234</ecNumber>
    </recommendedName>
    <alternativeName>
        <fullName evidence="1">N6-L-threonylcarbamoyladenine synthase</fullName>
        <shortName evidence="1">t(6)A synthase</shortName>
    </alternativeName>
    <alternativeName>
        <fullName evidence="1">t(6)A37 threonylcarbamoyladenosine biosynthesis protein TsaD</fullName>
    </alternativeName>
    <alternativeName>
        <fullName evidence="1">tRNA threonylcarbamoyladenosine biosynthesis protein TsaD</fullName>
    </alternativeName>
</protein>
<sequence>MKVLGIETSCDDCCVAVVENGIHILSNIKLNQTEHKKYYGIVPEIASRLHTEAIMSVCIKALKKANTKISEIDLIAVTSRPGLIGSLIVGLNFAKGLAISLKKPIICIDHILGHLYAPLMHSKIEYPFISLLLSGGHTLIAKQKNFDDVEILGRTLDDACGEAFDKVAKHYDMGFPGGPNIEQISKNGDENTFQFPVTTFKKKENWYDFSYSGLKTACIHQLEKFKSKDNPTTKNNIAASFQKAAFENLITPLKRAIKDTQINKLVIAGGVASNLYLREKIDKLKIQTYYPPLDLCTDNGAMIAGLGFNMYLKYGESPIEIDANSRIENYKNQYRGKNNEKNFSNA</sequence>
<organism>
    <name type="scientific">Borreliella burgdorferi (strain ATCC 35210 / DSM 4680 / CIP 102532 / B31)</name>
    <name type="common">Borrelia burgdorferi</name>
    <dbReference type="NCBI Taxonomy" id="224326"/>
    <lineage>
        <taxon>Bacteria</taxon>
        <taxon>Pseudomonadati</taxon>
        <taxon>Spirochaetota</taxon>
        <taxon>Spirochaetia</taxon>
        <taxon>Spirochaetales</taxon>
        <taxon>Borreliaceae</taxon>
        <taxon>Borreliella</taxon>
    </lineage>
</organism>
<evidence type="ECO:0000255" key="1">
    <source>
        <dbReference type="HAMAP-Rule" id="MF_01445"/>
    </source>
</evidence>
<feature type="chain" id="PRO_0000096958" description="tRNA N6-adenosine threonylcarbamoyltransferase">
    <location>
        <begin position="1"/>
        <end position="346"/>
    </location>
</feature>
<feature type="binding site" evidence="1">
    <location>
        <position position="110"/>
    </location>
    <ligand>
        <name>Fe cation</name>
        <dbReference type="ChEBI" id="CHEBI:24875"/>
    </ligand>
</feature>
<feature type="binding site" evidence="1">
    <location>
        <position position="114"/>
    </location>
    <ligand>
        <name>Fe cation</name>
        <dbReference type="ChEBI" id="CHEBI:24875"/>
    </ligand>
</feature>
<feature type="binding site" evidence="1">
    <location>
        <begin position="132"/>
        <end position="136"/>
    </location>
    <ligand>
        <name>substrate</name>
    </ligand>
</feature>
<feature type="binding site" evidence="1">
    <location>
        <position position="165"/>
    </location>
    <ligand>
        <name>substrate</name>
    </ligand>
</feature>
<feature type="binding site" evidence="1">
    <location>
        <position position="178"/>
    </location>
    <ligand>
        <name>substrate</name>
    </ligand>
</feature>
<feature type="binding site" evidence="1">
    <location>
        <position position="274"/>
    </location>
    <ligand>
        <name>substrate</name>
    </ligand>
</feature>
<feature type="binding site" evidence="1">
    <location>
        <position position="298"/>
    </location>
    <ligand>
        <name>Fe cation</name>
        <dbReference type="ChEBI" id="CHEBI:24875"/>
    </ligand>
</feature>
<proteinExistence type="inferred from homology"/>
<name>TSAD_BORBU</name>
<gene>
    <name evidence="1" type="primary">tsaD</name>
    <name type="synonym">gcp</name>
    <name type="ordered locus">BB_0769</name>
</gene>
<comment type="function">
    <text evidence="1">Required for the formation of a threonylcarbamoyl group on adenosine at position 37 (t(6)A37) in tRNAs that read codons beginning with adenine. Is involved in the transfer of the threonylcarbamoyl moiety of threonylcarbamoyl-AMP (TC-AMP) to the N6 group of A37, together with TsaE and TsaB. TsaD likely plays a direct catalytic role in this reaction.</text>
</comment>
<comment type="catalytic activity">
    <reaction evidence="1">
        <text>L-threonylcarbamoyladenylate + adenosine(37) in tRNA = N(6)-L-threonylcarbamoyladenosine(37) in tRNA + AMP + H(+)</text>
        <dbReference type="Rhea" id="RHEA:37059"/>
        <dbReference type="Rhea" id="RHEA-COMP:10162"/>
        <dbReference type="Rhea" id="RHEA-COMP:10163"/>
        <dbReference type="ChEBI" id="CHEBI:15378"/>
        <dbReference type="ChEBI" id="CHEBI:73682"/>
        <dbReference type="ChEBI" id="CHEBI:74411"/>
        <dbReference type="ChEBI" id="CHEBI:74418"/>
        <dbReference type="ChEBI" id="CHEBI:456215"/>
        <dbReference type="EC" id="2.3.1.234"/>
    </reaction>
</comment>
<comment type="cofactor">
    <cofactor evidence="1">
        <name>Fe(2+)</name>
        <dbReference type="ChEBI" id="CHEBI:29033"/>
    </cofactor>
    <text evidence="1">Binds 1 Fe(2+) ion per subunit.</text>
</comment>
<comment type="subcellular location">
    <subcellularLocation>
        <location evidence="1">Cytoplasm</location>
    </subcellularLocation>
</comment>
<comment type="similarity">
    <text evidence="1">Belongs to the KAE1 / TsaD family.</text>
</comment>